<comment type="function">
    <text evidence="1">Catalyzes the condensation of (S)-aspartate-beta-semialdehyde [(S)-ASA] and pyruvate to 4-hydroxy-tetrahydrodipicolinate (HTPA).</text>
</comment>
<comment type="catalytic activity">
    <reaction evidence="1">
        <text>L-aspartate 4-semialdehyde + pyruvate = (2S,4S)-4-hydroxy-2,3,4,5-tetrahydrodipicolinate + H2O + H(+)</text>
        <dbReference type="Rhea" id="RHEA:34171"/>
        <dbReference type="ChEBI" id="CHEBI:15361"/>
        <dbReference type="ChEBI" id="CHEBI:15377"/>
        <dbReference type="ChEBI" id="CHEBI:15378"/>
        <dbReference type="ChEBI" id="CHEBI:67139"/>
        <dbReference type="ChEBI" id="CHEBI:537519"/>
        <dbReference type="EC" id="4.3.3.7"/>
    </reaction>
</comment>
<comment type="pathway">
    <text evidence="1">Amino-acid biosynthesis; L-lysine biosynthesis via DAP pathway; (S)-tetrahydrodipicolinate from L-aspartate: step 3/4.</text>
</comment>
<comment type="subunit">
    <text evidence="1">Homotetramer; dimer of dimers.</text>
</comment>
<comment type="subcellular location">
    <subcellularLocation>
        <location evidence="1">Cytoplasm</location>
    </subcellularLocation>
</comment>
<comment type="similarity">
    <text evidence="1">Belongs to the DapA family.</text>
</comment>
<comment type="caution">
    <text evidence="2">Was originally thought to be a dihydrodipicolinate synthase (DHDPS), catalyzing the condensation of (S)-aspartate-beta-semialdehyde [(S)-ASA] and pyruvate to dihydrodipicolinate (DHDP). However, it was shown in E.coli that the product of the enzymatic reaction is not dihydrodipicolinate but in fact (4S)-4-hydroxy-2,3,4,5-tetrahydro-(2S)-dipicolinic acid (HTPA), and that the consecutive dehydration reaction leading to DHDP is not spontaneous but catalyzed by DapB.</text>
</comment>
<feature type="chain" id="PRO_0000103102" description="4-hydroxy-tetrahydrodipicolinate synthase">
    <location>
        <begin position="1"/>
        <end position="286"/>
    </location>
</feature>
<feature type="active site" description="Proton donor/acceptor" evidence="1">
    <location>
        <position position="129"/>
    </location>
</feature>
<feature type="active site" description="Schiff-base intermediate with substrate" evidence="1">
    <location>
        <position position="157"/>
    </location>
</feature>
<feature type="binding site" evidence="1">
    <location>
        <position position="42"/>
    </location>
    <ligand>
        <name>pyruvate</name>
        <dbReference type="ChEBI" id="CHEBI:15361"/>
    </ligand>
</feature>
<feature type="binding site" evidence="1">
    <location>
        <position position="196"/>
    </location>
    <ligand>
        <name>pyruvate</name>
        <dbReference type="ChEBI" id="CHEBI:15361"/>
    </ligand>
</feature>
<feature type="site" description="Part of a proton relay during catalysis" evidence="1">
    <location>
        <position position="41"/>
    </location>
</feature>
<feature type="site" description="Part of a proton relay during catalysis" evidence="1">
    <location>
        <position position="103"/>
    </location>
</feature>
<organism>
    <name type="scientific">Chlamydia trachomatis serovar D (strain ATCC VR-885 / DSM 19411 / UW-3/Cx)</name>
    <dbReference type="NCBI Taxonomy" id="272561"/>
    <lineage>
        <taxon>Bacteria</taxon>
        <taxon>Pseudomonadati</taxon>
        <taxon>Chlamydiota</taxon>
        <taxon>Chlamydiia</taxon>
        <taxon>Chlamydiales</taxon>
        <taxon>Chlamydiaceae</taxon>
        <taxon>Chlamydia/Chlamydophila group</taxon>
        <taxon>Chlamydia</taxon>
    </lineage>
</organism>
<proteinExistence type="inferred from homology"/>
<sequence length="286" mass="31291">MSVLGACITPFKADLSIDFAALESVVRSQEHAGNGIILFGSTGEGLSLTYEEKLSILSFVSTLNLNVPIFVGVTATSVQETMSWIDFAQQWPIDGFLVPTPLYTRPGLNGQKAWFDRILSVSRKPIILYNNPIRTGVSLYPEVVKSFVSHPLCIGVKDSGGSAQACELFAESGLRVFCGDDNLWPDMRLSGASGVISVLANVWPELARDYVAQGRPIEAWKKVCSWLNLSTNPLGIKALMAAQKMIECDAVRPPLSIRDLQRRDELADILACRATLQTELLSVCRQ</sequence>
<evidence type="ECO:0000255" key="1">
    <source>
        <dbReference type="HAMAP-Rule" id="MF_00418"/>
    </source>
</evidence>
<evidence type="ECO:0000305" key="2"/>
<reference key="1">
    <citation type="journal article" date="1998" name="Science">
        <title>Genome sequence of an obligate intracellular pathogen of humans: Chlamydia trachomatis.</title>
        <authorList>
            <person name="Stephens R.S."/>
            <person name="Kalman S."/>
            <person name="Lammel C.J."/>
            <person name="Fan J."/>
            <person name="Marathe R."/>
            <person name="Aravind L."/>
            <person name="Mitchell W.P."/>
            <person name="Olinger L."/>
            <person name="Tatusov R.L."/>
            <person name="Zhao Q."/>
            <person name="Koonin E.V."/>
            <person name="Davis R.W."/>
        </authorList>
    </citation>
    <scope>NUCLEOTIDE SEQUENCE [LARGE SCALE GENOMIC DNA]</scope>
    <source>
        <strain>ATCC VR-885 / DSM 19411 / UW-3/Cx</strain>
    </source>
</reference>
<keyword id="KW-0028">Amino-acid biosynthesis</keyword>
<keyword id="KW-0963">Cytoplasm</keyword>
<keyword id="KW-0220">Diaminopimelate biosynthesis</keyword>
<keyword id="KW-0456">Lyase</keyword>
<keyword id="KW-0457">Lysine biosynthesis</keyword>
<keyword id="KW-1185">Reference proteome</keyword>
<keyword id="KW-0704">Schiff base</keyword>
<accession>O84366</accession>
<dbReference type="EC" id="4.3.3.7" evidence="1"/>
<dbReference type="EMBL" id="AE001273">
    <property type="protein sequence ID" value="AAC67957.1"/>
    <property type="molecule type" value="Genomic_DNA"/>
</dbReference>
<dbReference type="PIR" id="F71524">
    <property type="entry name" value="F71524"/>
</dbReference>
<dbReference type="RefSeq" id="NP_219870.1">
    <property type="nucleotide sequence ID" value="NC_000117.1"/>
</dbReference>
<dbReference type="RefSeq" id="WP_009871714.1">
    <property type="nucleotide sequence ID" value="NC_000117.1"/>
</dbReference>
<dbReference type="SMR" id="O84366"/>
<dbReference type="FunCoup" id="O84366">
    <property type="interactions" value="146"/>
</dbReference>
<dbReference type="STRING" id="272561.CT_361"/>
<dbReference type="EnsemblBacteria" id="AAC67957">
    <property type="protein sequence ID" value="AAC67957"/>
    <property type="gene ID" value="CT_361"/>
</dbReference>
<dbReference type="GeneID" id="884755"/>
<dbReference type="KEGG" id="ctr:CT_361"/>
<dbReference type="PATRIC" id="fig|272561.5.peg.390"/>
<dbReference type="HOGENOM" id="CLU_049343_7_0_0"/>
<dbReference type="InParanoid" id="O84366"/>
<dbReference type="OrthoDB" id="9782828at2"/>
<dbReference type="UniPathway" id="UPA00034">
    <property type="reaction ID" value="UER00017"/>
</dbReference>
<dbReference type="Proteomes" id="UP000000431">
    <property type="component" value="Chromosome"/>
</dbReference>
<dbReference type="GO" id="GO:0005829">
    <property type="term" value="C:cytosol"/>
    <property type="evidence" value="ECO:0000318"/>
    <property type="project" value="GO_Central"/>
</dbReference>
<dbReference type="GO" id="GO:0008840">
    <property type="term" value="F:4-hydroxy-tetrahydrodipicolinate synthase activity"/>
    <property type="evidence" value="ECO:0000318"/>
    <property type="project" value="GO_Central"/>
</dbReference>
<dbReference type="GO" id="GO:0019877">
    <property type="term" value="P:diaminopimelate biosynthetic process"/>
    <property type="evidence" value="ECO:0007669"/>
    <property type="project" value="UniProtKB-UniRule"/>
</dbReference>
<dbReference type="GO" id="GO:0009089">
    <property type="term" value="P:lysine biosynthetic process via diaminopimelate"/>
    <property type="evidence" value="ECO:0007669"/>
    <property type="project" value="UniProtKB-UniRule"/>
</dbReference>
<dbReference type="CDD" id="cd00408">
    <property type="entry name" value="DHDPS-like"/>
    <property type="match status" value="1"/>
</dbReference>
<dbReference type="Gene3D" id="3.20.20.70">
    <property type="entry name" value="Aldolase class I"/>
    <property type="match status" value="1"/>
</dbReference>
<dbReference type="HAMAP" id="MF_00418">
    <property type="entry name" value="DapA"/>
    <property type="match status" value="1"/>
</dbReference>
<dbReference type="InterPro" id="IPR013785">
    <property type="entry name" value="Aldolase_TIM"/>
</dbReference>
<dbReference type="InterPro" id="IPR005263">
    <property type="entry name" value="DapA"/>
</dbReference>
<dbReference type="InterPro" id="IPR002220">
    <property type="entry name" value="DapA-like"/>
</dbReference>
<dbReference type="InterPro" id="IPR020625">
    <property type="entry name" value="Schiff_base-form_aldolases_AS"/>
</dbReference>
<dbReference type="InterPro" id="IPR020624">
    <property type="entry name" value="Schiff_base-form_aldolases_CS"/>
</dbReference>
<dbReference type="NCBIfam" id="TIGR00674">
    <property type="entry name" value="dapA"/>
    <property type="match status" value="1"/>
</dbReference>
<dbReference type="PANTHER" id="PTHR12128:SF66">
    <property type="entry name" value="4-HYDROXY-2-OXOGLUTARATE ALDOLASE, MITOCHONDRIAL"/>
    <property type="match status" value="1"/>
</dbReference>
<dbReference type="PANTHER" id="PTHR12128">
    <property type="entry name" value="DIHYDRODIPICOLINATE SYNTHASE"/>
    <property type="match status" value="1"/>
</dbReference>
<dbReference type="Pfam" id="PF00701">
    <property type="entry name" value="DHDPS"/>
    <property type="match status" value="1"/>
</dbReference>
<dbReference type="PIRSF" id="PIRSF001365">
    <property type="entry name" value="DHDPS"/>
    <property type="match status" value="1"/>
</dbReference>
<dbReference type="PRINTS" id="PR00146">
    <property type="entry name" value="DHPICSNTHASE"/>
</dbReference>
<dbReference type="SMART" id="SM01130">
    <property type="entry name" value="DHDPS"/>
    <property type="match status" value="1"/>
</dbReference>
<dbReference type="SUPFAM" id="SSF51569">
    <property type="entry name" value="Aldolase"/>
    <property type="match status" value="1"/>
</dbReference>
<dbReference type="PROSITE" id="PS00665">
    <property type="entry name" value="DHDPS_1"/>
    <property type="match status" value="1"/>
</dbReference>
<dbReference type="PROSITE" id="PS00666">
    <property type="entry name" value="DHDPS_2"/>
    <property type="match status" value="1"/>
</dbReference>
<name>DAPA_CHLTR</name>
<gene>
    <name evidence="1" type="primary">dapA</name>
    <name type="ordered locus">CT_361</name>
</gene>
<protein>
    <recommendedName>
        <fullName evidence="1">4-hydroxy-tetrahydrodipicolinate synthase</fullName>
        <shortName evidence="1">HTPA synthase</shortName>
        <ecNumber evidence="1">4.3.3.7</ecNumber>
    </recommendedName>
</protein>